<evidence type="ECO:0000255" key="1">
    <source>
        <dbReference type="HAMAP-Rule" id="MF_00071"/>
    </source>
</evidence>
<feature type="chain" id="PRO_1000032004" description="Elongation factor 4">
    <location>
        <begin position="1"/>
        <end position="604"/>
    </location>
</feature>
<feature type="domain" description="tr-type G">
    <location>
        <begin position="10"/>
        <end position="191"/>
    </location>
</feature>
<feature type="binding site" evidence="1">
    <location>
        <begin position="22"/>
        <end position="27"/>
    </location>
    <ligand>
        <name>GTP</name>
        <dbReference type="ChEBI" id="CHEBI:37565"/>
    </ligand>
</feature>
<feature type="binding site" evidence="1">
    <location>
        <begin position="138"/>
        <end position="141"/>
    </location>
    <ligand>
        <name>GTP</name>
        <dbReference type="ChEBI" id="CHEBI:37565"/>
    </ligand>
</feature>
<comment type="function">
    <text evidence="1">Required for accurate and efficient protein synthesis under certain stress conditions. May act as a fidelity factor of the translation reaction, by catalyzing a one-codon backward translocation of tRNAs on improperly translocated ribosomes. Back-translocation proceeds from a post-translocation (POST) complex to a pre-translocation (PRE) complex, thus giving elongation factor G a second chance to translocate the tRNAs correctly. Binds to ribosomes in a GTP-dependent manner.</text>
</comment>
<comment type="catalytic activity">
    <reaction evidence="1">
        <text>GTP + H2O = GDP + phosphate + H(+)</text>
        <dbReference type="Rhea" id="RHEA:19669"/>
        <dbReference type="ChEBI" id="CHEBI:15377"/>
        <dbReference type="ChEBI" id="CHEBI:15378"/>
        <dbReference type="ChEBI" id="CHEBI:37565"/>
        <dbReference type="ChEBI" id="CHEBI:43474"/>
        <dbReference type="ChEBI" id="CHEBI:58189"/>
        <dbReference type="EC" id="3.6.5.n1"/>
    </reaction>
</comment>
<comment type="subcellular location">
    <subcellularLocation>
        <location evidence="1">Cell inner membrane</location>
        <topology evidence="1">Peripheral membrane protein</topology>
        <orientation evidence="1">Cytoplasmic side</orientation>
    </subcellularLocation>
</comment>
<comment type="similarity">
    <text evidence="1">Belongs to the TRAFAC class translation factor GTPase superfamily. Classic translation factor GTPase family. LepA subfamily.</text>
</comment>
<dbReference type="EC" id="3.6.5.n1" evidence="1"/>
<dbReference type="EMBL" id="AM260522">
    <property type="protein sequence ID" value="CAJ99739.1"/>
    <property type="molecule type" value="Genomic_DNA"/>
</dbReference>
<dbReference type="SMR" id="Q17X87"/>
<dbReference type="STRING" id="382638.Hac_0967"/>
<dbReference type="KEGG" id="hac:Hac_0967"/>
<dbReference type="eggNOG" id="COG0481">
    <property type="taxonomic scope" value="Bacteria"/>
</dbReference>
<dbReference type="HOGENOM" id="CLU_009995_3_3_7"/>
<dbReference type="Proteomes" id="UP000000775">
    <property type="component" value="Chromosome"/>
</dbReference>
<dbReference type="GO" id="GO:0005886">
    <property type="term" value="C:plasma membrane"/>
    <property type="evidence" value="ECO:0007669"/>
    <property type="project" value="UniProtKB-SubCell"/>
</dbReference>
<dbReference type="GO" id="GO:0005525">
    <property type="term" value="F:GTP binding"/>
    <property type="evidence" value="ECO:0007669"/>
    <property type="project" value="UniProtKB-UniRule"/>
</dbReference>
<dbReference type="GO" id="GO:0003924">
    <property type="term" value="F:GTPase activity"/>
    <property type="evidence" value="ECO:0007669"/>
    <property type="project" value="UniProtKB-UniRule"/>
</dbReference>
<dbReference type="GO" id="GO:0043022">
    <property type="term" value="F:ribosome binding"/>
    <property type="evidence" value="ECO:0007669"/>
    <property type="project" value="UniProtKB-UniRule"/>
</dbReference>
<dbReference type="GO" id="GO:0003746">
    <property type="term" value="F:translation elongation factor activity"/>
    <property type="evidence" value="ECO:0007669"/>
    <property type="project" value="UniProtKB-UniRule"/>
</dbReference>
<dbReference type="GO" id="GO:0045727">
    <property type="term" value="P:positive regulation of translation"/>
    <property type="evidence" value="ECO:0007669"/>
    <property type="project" value="UniProtKB-UniRule"/>
</dbReference>
<dbReference type="CDD" id="cd03699">
    <property type="entry name" value="EF4_II"/>
    <property type="match status" value="1"/>
</dbReference>
<dbReference type="CDD" id="cd16260">
    <property type="entry name" value="EF4_III"/>
    <property type="match status" value="1"/>
</dbReference>
<dbReference type="CDD" id="cd01890">
    <property type="entry name" value="LepA"/>
    <property type="match status" value="1"/>
</dbReference>
<dbReference type="CDD" id="cd03709">
    <property type="entry name" value="lepA_C"/>
    <property type="match status" value="1"/>
</dbReference>
<dbReference type="FunFam" id="3.40.50.300:FF:000078">
    <property type="entry name" value="Elongation factor 4"/>
    <property type="match status" value="1"/>
</dbReference>
<dbReference type="FunFam" id="3.30.70.240:FF:000007">
    <property type="entry name" value="Translation factor GUF1, mitochondrial"/>
    <property type="match status" value="1"/>
</dbReference>
<dbReference type="FunFam" id="3.30.70.2570:FF:000001">
    <property type="entry name" value="Translation factor GUF1, mitochondrial"/>
    <property type="match status" value="1"/>
</dbReference>
<dbReference type="FunFam" id="3.30.70.870:FF:000004">
    <property type="entry name" value="Translation factor GUF1, mitochondrial"/>
    <property type="match status" value="1"/>
</dbReference>
<dbReference type="Gene3D" id="3.30.70.240">
    <property type="match status" value="1"/>
</dbReference>
<dbReference type="Gene3D" id="3.30.70.2570">
    <property type="entry name" value="Elongation factor 4, C-terminal domain"/>
    <property type="match status" value="1"/>
</dbReference>
<dbReference type="Gene3D" id="3.30.70.870">
    <property type="entry name" value="Elongation Factor G (Translational Gtpase), domain 3"/>
    <property type="match status" value="1"/>
</dbReference>
<dbReference type="Gene3D" id="3.40.50.300">
    <property type="entry name" value="P-loop containing nucleotide triphosphate hydrolases"/>
    <property type="match status" value="1"/>
</dbReference>
<dbReference type="Gene3D" id="2.40.30.10">
    <property type="entry name" value="Translation factors"/>
    <property type="match status" value="1"/>
</dbReference>
<dbReference type="HAMAP" id="MF_00071">
    <property type="entry name" value="LepA"/>
    <property type="match status" value="1"/>
</dbReference>
<dbReference type="InterPro" id="IPR006297">
    <property type="entry name" value="EF-4"/>
</dbReference>
<dbReference type="InterPro" id="IPR035647">
    <property type="entry name" value="EFG_III/V"/>
</dbReference>
<dbReference type="InterPro" id="IPR000640">
    <property type="entry name" value="EFG_V-like"/>
</dbReference>
<dbReference type="InterPro" id="IPR004161">
    <property type="entry name" value="EFTu-like_2"/>
</dbReference>
<dbReference type="InterPro" id="IPR031157">
    <property type="entry name" value="G_TR_CS"/>
</dbReference>
<dbReference type="InterPro" id="IPR038363">
    <property type="entry name" value="LepA_C_sf"/>
</dbReference>
<dbReference type="InterPro" id="IPR013842">
    <property type="entry name" value="LepA_CTD"/>
</dbReference>
<dbReference type="InterPro" id="IPR035654">
    <property type="entry name" value="LepA_IV"/>
</dbReference>
<dbReference type="InterPro" id="IPR027417">
    <property type="entry name" value="P-loop_NTPase"/>
</dbReference>
<dbReference type="InterPro" id="IPR005225">
    <property type="entry name" value="Small_GTP-bd"/>
</dbReference>
<dbReference type="InterPro" id="IPR000795">
    <property type="entry name" value="T_Tr_GTP-bd_dom"/>
</dbReference>
<dbReference type="InterPro" id="IPR009000">
    <property type="entry name" value="Transl_B-barrel_sf"/>
</dbReference>
<dbReference type="NCBIfam" id="TIGR01393">
    <property type="entry name" value="lepA"/>
    <property type="match status" value="1"/>
</dbReference>
<dbReference type="NCBIfam" id="TIGR00231">
    <property type="entry name" value="small_GTP"/>
    <property type="match status" value="1"/>
</dbReference>
<dbReference type="PANTHER" id="PTHR43512:SF4">
    <property type="entry name" value="TRANSLATION FACTOR GUF1 HOMOLOG, CHLOROPLASTIC"/>
    <property type="match status" value="1"/>
</dbReference>
<dbReference type="PANTHER" id="PTHR43512">
    <property type="entry name" value="TRANSLATION FACTOR GUF1-RELATED"/>
    <property type="match status" value="1"/>
</dbReference>
<dbReference type="Pfam" id="PF00679">
    <property type="entry name" value="EFG_C"/>
    <property type="match status" value="1"/>
</dbReference>
<dbReference type="Pfam" id="PF00009">
    <property type="entry name" value="GTP_EFTU"/>
    <property type="match status" value="1"/>
</dbReference>
<dbReference type="Pfam" id="PF03144">
    <property type="entry name" value="GTP_EFTU_D2"/>
    <property type="match status" value="1"/>
</dbReference>
<dbReference type="Pfam" id="PF06421">
    <property type="entry name" value="LepA_C"/>
    <property type="match status" value="1"/>
</dbReference>
<dbReference type="PRINTS" id="PR00315">
    <property type="entry name" value="ELONGATNFCT"/>
</dbReference>
<dbReference type="SUPFAM" id="SSF54980">
    <property type="entry name" value="EF-G C-terminal domain-like"/>
    <property type="match status" value="2"/>
</dbReference>
<dbReference type="SUPFAM" id="SSF52540">
    <property type="entry name" value="P-loop containing nucleoside triphosphate hydrolases"/>
    <property type="match status" value="1"/>
</dbReference>
<dbReference type="SUPFAM" id="SSF50447">
    <property type="entry name" value="Translation proteins"/>
    <property type="match status" value="1"/>
</dbReference>
<dbReference type="PROSITE" id="PS00301">
    <property type="entry name" value="G_TR_1"/>
    <property type="match status" value="1"/>
</dbReference>
<dbReference type="PROSITE" id="PS51722">
    <property type="entry name" value="G_TR_2"/>
    <property type="match status" value="1"/>
</dbReference>
<sequence>MKPTTPTPMKNIRNFSIIAHIDHGKSTLADCLIAECNAISNREMTSQVMDTMDIEKERGITIKAQSVRLNYTLKGEDYVLNLIDTPGHVDFSYEVSRSLCSCEGALLVVDATQGVEAQTIANTYIALDNHLEILPVINKIDLPNANVLEVKQDIEDTIGIDCSSVNEVSAKAKIGIKDLLEKIITTIPAPSGDASAPLKALIYDSWFDNYLGALALVRIMDGNINTEQEILVMGTGKKHGVLGLYYPNPLKKIPTKSLECGEIGIVSLGLKSVTDIAVGDTLTDAKNPTSKPIEGFMPAKPFVFAGIYPIETDRFEDLREALLKLQLNDCALNFEPESSVALGFGFRVGFLGLLHMEVIKERLEREFSLNLIATAPTVVYEVHLTDNSIKYVQNPSELPPENHIACIKEPFVRATIITPSEFLGNLMQLLNNKRGIQEKMEYLNQSRVMLTYSLPSNEIVMDFYDKLKSCTKGYASFDYEPIENREANLVKLDVRVAGDIVDALSIIIDKNKAYEKGRALVEAMKELIPHQLFEVAIQASVGNKIIARETIKSVGKNVTAKCYGGDITRKRKLLEKQKEGKKRMKAIGKVELPQDVFLAILKID</sequence>
<keyword id="KW-0997">Cell inner membrane</keyword>
<keyword id="KW-1003">Cell membrane</keyword>
<keyword id="KW-0342">GTP-binding</keyword>
<keyword id="KW-0378">Hydrolase</keyword>
<keyword id="KW-0472">Membrane</keyword>
<keyword id="KW-0547">Nucleotide-binding</keyword>
<keyword id="KW-0648">Protein biosynthesis</keyword>
<gene>
    <name evidence="1" type="primary">lepA</name>
    <name type="ordered locus">Hac_0967</name>
</gene>
<proteinExistence type="inferred from homology"/>
<organism>
    <name type="scientific">Helicobacter acinonychis (strain Sheeba)</name>
    <dbReference type="NCBI Taxonomy" id="382638"/>
    <lineage>
        <taxon>Bacteria</taxon>
        <taxon>Pseudomonadati</taxon>
        <taxon>Campylobacterota</taxon>
        <taxon>Epsilonproteobacteria</taxon>
        <taxon>Campylobacterales</taxon>
        <taxon>Helicobacteraceae</taxon>
        <taxon>Helicobacter</taxon>
    </lineage>
</organism>
<accession>Q17X87</accession>
<name>LEPA_HELAH</name>
<reference key="1">
    <citation type="journal article" date="2006" name="PLoS Genet.">
        <title>Who ate whom? Adaptive Helicobacter genomic changes that accompanied a host jump from early humans to large felines.</title>
        <authorList>
            <person name="Eppinger M."/>
            <person name="Baar C."/>
            <person name="Linz B."/>
            <person name="Raddatz G."/>
            <person name="Lanz C."/>
            <person name="Keller H."/>
            <person name="Morelli G."/>
            <person name="Gressmann H."/>
            <person name="Achtman M."/>
            <person name="Schuster S.C."/>
        </authorList>
    </citation>
    <scope>NUCLEOTIDE SEQUENCE [LARGE SCALE GENOMIC DNA]</scope>
    <source>
        <strain>Sheeba</strain>
    </source>
</reference>
<protein>
    <recommendedName>
        <fullName evidence="1">Elongation factor 4</fullName>
        <shortName evidence="1">EF-4</shortName>
        <ecNumber evidence="1">3.6.5.n1</ecNumber>
    </recommendedName>
    <alternativeName>
        <fullName evidence="1">Ribosomal back-translocase LepA</fullName>
    </alternativeName>
</protein>